<protein>
    <recommendedName>
        <fullName evidence="1">Cell division protein ZapD</fullName>
    </recommendedName>
    <alternativeName>
        <fullName evidence="1">Z ring-associated protein D</fullName>
    </alternativeName>
</protein>
<organism>
    <name type="scientific">Vibrio cholerae serotype O1 (strain M66-2)</name>
    <dbReference type="NCBI Taxonomy" id="579112"/>
    <lineage>
        <taxon>Bacteria</taxon>
        <taxon>Pseudomonadati</taxon>
        <taxon>Pseudomonadota</taxon>
        <taxon>Gammaproteobacteria</taxon>
        <taxon>Vibrionales</taxon>
        <taxon>Vibrionaceae</taxon>
        <taxon>Vibrio</taxon>
    </lineage>
</organism>
<gene>
    <name evidence="1" type="primary">zapD</name>
    <name type="ordered locus">VCM66_2351</name>
</gene>
<proteinExistence type="inferred from homology"/>
<sequence>MTTHQFEHPLNEKTRIYLRVEALLNQMERASTFSDGIQHQLFFRSLFDMLEIFEQIQLKSELAKDMEKQRLTYRSWLHVEGVDQEMLNSLLTEVDEVHRDLMSAERFGQSLKEDRFLSAIRQRFNLPGGSCCFDLPALHYWLHLPLDRKMRDAQQWMQTVTPLSNALKLWLKLTRETGHYRSRMASNGFYQSDAEDANILRLAIPLEYGVYPMISGHKNRFAIKFIDFHSGQACTQDIAFDLAVCC</sequence>
<accession>C3LQX1</accession>
<evidence type="ECO:0000255" key="1">
    <source>
        <dbReference type="HAMAP-Rule" id="MF_01092"/>
    </source>
</evidence>
<reference key="1">
    <citation type="journal article" date="2008" name="PLoS ONE">
        <title>A recalibrated molecular clock and independent origins for the cholera pandemic clones.</title>
        <authorList>
            <person name="Feng L."/>
            <person name="Reeves P.R."/>
            <person name="Lan R."/>
            <person name="Ren Y."/>
            <person name="Gao C."/>
            <person name="Zhou Z."/>
            <person name="Ren Y."/>
            <person name="Cheng J."/>
            <person name="Wang W."/>
            <person name="Wang J."/>
            <person name="Qian W."/>
            <person name="Li D."/>
            <person name="Wang L."/>
        </authorList>
    </citation>
    <scope>NUCLEOTIDE SEQUENCE [LARGE SCALE GENOMIC DNA]</scope>
    <source>
        <strain>M66-2</strain>
    </source>
</reference>
<dbReference type="EMBL" id="CP001233">
    <property type="protein sequence ID" value="ACP06649.1"/>
    <property type="molecule type" value="Genomic_DNA"/>
</dbReference>
<dbReference type="RefSeq" id="WP_000207198.1">
    <property type="nucleotide sequence ID" value="NC_012578.1"/>
</dbReference>
<dbReference type="SMR" id="C3LQX1"/>
<dbReference type="KEGG" id="vcm:VCM66_2351"/>
<dbReference type="HOGENOM" id="CLU_076303_0_0_6"/>
<dbReference type="Proteomes" id="UP000001217">
    <property type="component" value="Chromosome I"/>
</dbReference>
<dbReference type="GO" id="GO:0032153">
    <property type="term" value="C:cell division site"/>
    <property type="evidence" value="ECO:0007669"/>
    <property type="project" value="TreeGrafter"/>
</dbReference>
<dbReference type="GO" id="GO:0005737">
    <property type="term" value="C:cytoplasm"/>
    <property type="evidence" value="ECO:0007669"/>
    <property type="project" value="UniProtKB-SubCell"/>
</dbReference>
<dbReference type="GO" id="GO:0000917">
    <property type="term" value="P:division septum assembly"/>
    <property type="evidence" value="ECO:0007669"/>
    <property type="project" value="UniProtKB-KW"/>
</dbReference>
<dbReference type="GO" id="GO:0043093">
    <property type="term" value="P:FtsZ-dependent cytokinesis"/>
    <property type="evidence" value="ECO:0007669"/>
    <property type="project" value="UniProtKB-UniRule"/>
</dbReference>
<dbReference type="Gene3D" id="1.10.3900.10">
    <property type="entry name" value="YacF-like"/>
    <property type="match status" value="1"/>
</dbReference>
<dbReference type="Gene3D" id="2.60.440.10">
    <property type="entry name" value="YacF-like domains"/>
    <property type="match status" value="1"/>
</dbReference>
<dbReference type="HAMAP" id="MF_01092">
    <property type="entry name" value="ZapD"/>
    <property type="match status" value="1"/>
</dbReference>
<dbReference type="InterPro" id="IPR009777">
    <property type="entry name" value="ZapD"/>
</dbReference>
<dbReference type="InterPro" id="IPR027462">
    <property type="entry name" value="ZapD_C"/>
</dbReference>
<dbReference type="InterPro" id="IPR036268">
    <property type="entry name" value="ZapD_sf"/>
</dbReference>
<dbReference type="NCBIfam" id="NF003655">
    <property type="entry name" value="PRK05287.1-3"/>
    <property type="match status" value="1"/>
</dbReference>
<dbReference type="PANTHER" id="PTHR39455">
    <property type="entry name" value="CELL DIVISION PROTEIN ZAPD"/>
    <property type="match status" value="1"/>
</dbReference>
<dbReference type="PANTHER" id="PTHR39455:SF1">
    <property type="entry name" value="CELL DIVISION PROTEIN ZAPD"/>
    <property type="match status" value="1"/>
</dbReference>
<dbReference type="Pfam" id="PF07072">
    <property type="entry name" value="ZapD"/>
    <property type="match status" value="1"/>
</dbReference>
<dbReference type="SUPFAM" id="SSF160950">
    <property type="entry name" value="YacF-like"/>
    <property type="match status" value="1"/>
</dbReference>
<keyword id="KW-0131">Cell cycle</keyword>
<keyword id="KW-0132">Cell division</keyword>
<keyword id="KW-0963">Cytoplasm</keyword>
<keyword id="KW-0717">Septation</keyword>
<comment type="function">
    <text evidence="1">Cell division factor that enhances FtsZ-ring assembly. Directly interacts with FtsZ and promotes bundling of FtsZ protofilaments, with a reduction in FtsZ GTPase activity.</text>
</comment>
<comment type="subunit">
    <text evidence="1">Interacts with FtsZ.</text>
</comment>
<comment type="subcellular location">
    <subcellularLocation>
        <location evidence="1">Cytoplasm</location>
    </subcellularLocation>
    <text evidence="1">Localizes to mid-cell in an FtsZ-dependent manner.</text>
</comment>
<comment type="similarity">
    <text evidence="1">Belongs to the ZapD family.</text>
</comment>
<name>ZAPD_VIBCM</name>
<feature type="chain" id="PRO_1000149892" description="Cell division protein ZapD">
    <location>
        <begin position="1"/>
        <end position="246"/>
    </location>
</feature>